<accession>Q8D8N2</accession>
<proteinExistence type="inferred from homology"/>
<comment type="function">
    <text evidence="1">Catalyzes a mechanistically unusual reaction, the ATP-dependent insertion of CO2 between the N7 and N8 nitrogen atoms of 7,8-diaminopelargonic acid (DAPA, also called 7,8-diammoniononanoate) to form a ureido ring.</text>
</comment>
<comment type="catalytic activity">
    <reaction evidence="1">
        <text>(7R,8S)-7,8-diammoniononanoate + CO2 + ATP = (4R,5S)-dethiobiotin + ADP + phosphate + 3 H(+)</text>
        <dbReference type="Rhea" id="RHEA:15805"/>
        <dbReference type="ChEBI" id="CHEBI:15378"/>
        <dbReference type="ChEBI" id="CHEBI:16526"/>
        <dbReference type="ChEBI" id="CHEBI:30616"/>
        <dbReference type="ChEBI" id="CHEBI:43474"/>
        <dbReference type="ChEBI" id="CHEBI:149469"/>
        <dbReference type="ChEBI" id="CHEBI:149473"/>
        <dbReference type="ChEBI" id="CHEBI:456216"/>
        <dbReference type="EC" id="6.3.3.3"/>
    </reaction>
</comment>
<comment type="cofactor">
    <cofactor evidence="1">
        <name>Mg(2+)</name>
        <dbReference type="ChEBI" id="CHEBI:18420"/>
    </cofactor>
</comment>
<comment type="pathway">
    <text evidence="1">Cofactor biosynthesis; biotin biosynthesis; biotin from 7,8-diaminononanoate: step 1/2.</text>
</comment>
<comment type="subunit">
    <text evidence="1">Homodimer.</text>
</comment>
<comment type="subcellular location">
    <subcellularLocation>
        <location evidence="1">Cytoplasm</location>
    </subcellularLocation>
</comment>
<comment type="similarity">
    <text evidence="1">Belongs to the dethiobiotin synthetase family.</text>
</comment>
<gene>
    <name evidence="1" type="primary">bioD</name>
    <name type="ordered locus">VV1_2940</name>
</gene>
<name>BIOD_VIBVU</name>
<protein>
    <recommendedName>
        <fullName evidence="1">ATP-dependent dethiobiotin synthetase BioD</fullName>
        <ecNumber evidence="1">6.3.3.3</ecNumber>
    </recommendedName>
    <alternativeName>
        <fullName evidence="1">DTB synthetase</fullName>
        <shortName evidence="1">DTBS</shortName>
    </alternativeName>
    <alternativeName>
        <fullName evidence="1">Dethiobiotin synthase</fullName>
    </alternativeName>
</protein>
<reference key="1">
    <citation type="submission" date="2002-12" db="EMBL/GenBank/DDBJ databases">
        <title>Complete genome sequence of Vibrio vulnificus CMCP6.</title>
        <authorList>
            <person name="Rhee J.H."/>
            <person name="Kim S.Y."/>
            <person name="Chung S.S."/>
            <person name="Kim J.J."/>
            <person name="Moon Y.H."/>
            <person name="Jeong H."/>
            <person name="Choy H.E."/>
        </authorList>
    </citation>
    <scope>NUCLEOTIDE SEQUENCE [LARGE SCALE GENOMIC DNA]</scope>
    <source>
        <strain>CMCP6</strain>
    </source>
</reference>
<keyword id="KW-0067">ATP-binding</keyword>
<keyword id="KW-0093">Biotin biosynthesis</keyword>
<keyword id="KW-0963">Cytoplasm</keyword>
<keyword id="KW-0436">Ligase</keyword>
<keyword id="KW-0460">Magnesium</keyword>
<keyword id="KW-0479">Metal-binding</keyword>
<keyword id="KW-0547">Nucleotide-binding</keyword>
<evidence type="ECO:0000255" key="1">
    <source>
        <dbReference type="HAMAP-Rule" id="MF_00336"/>
    </source>
</evidence>
<organism>
    <name type="scientific">Vibrio vulnificus (strain CMCP6)</name>
    <dbReference type="NCBI Taxonomy" id="216895"/>
    <lineage>
        <taxon>Bacteria</taxon>
        <taxon>Pseudomonadati</taxon>
        <taxon>Pseudomonadota</taxon>
        <taxon>Gammaproteobacteria</taxon>
        <taxon>Vibrionales</taxon>
        <taxon>Vibrionaceae</taxon>
        <taxon>Vibrio</taxon>
    </lineage>
</organism>
<feature type="chain" id="PRO_0000187995" description="ATP-dependent dethiobiotin synthetase BioD">
    <location>
        <begin position="1"/>
        <end position="227"/>
    </location>
</feature>
<feature type="active site" evidence="1">
    <location>
        <position position="38"/>
    </location>
</feature>
<feature type="binding site" evidence="1">
    <location>
        <begin position="13"/>
        <end position="18"/>
    </location>
    <ligand>
        <name>ATP</name>
        <dbReference type="ChEBI" id="CHEBI:30616"/>
    </ligand>
</feature>
<feature type="binding site" evidence="1">
    <location>
        <position position="17"/>
    </location>
    <ligand>
        <name>Mg(2+)</name>
        <dbReference type="ChEBI" id="CHEBI:18420"/>
    </ligand>
</feature>
<feature type="binding site" evidence="1">
    <location>
        <position position="55"/>
    </location>
    <ligand>
        <name>ATP</name>
        <dbReference type="ChEBI" id="CHEBI:30616"/>
    </ligand>
</feature>
<feature type="binding site" evidence="1">
    <location>
        <position position="55"/>
    </location>
    <ligand>
        <name>Mg(2+)</name>
        <dbReference type="ChEBI" id="CHEBI:18420"/>
    </ligand>
</feature>
<feature type="binding site" evidence="1">
    <location>
        <begin position="116"/>
        <end position="119"/>
    </location>
    <ligand>
        <name>ATP</name>
        <dbReference type="ChEBI" id="CHEBI:30616"/>
    </ligand>
</feature>
<feature type="binding site" evidence="1">
    <location>
        <position position="116"/>
    </location>
    <ligand>
        <name>Mg(2+)</name>
        <dbReference type="ChEBI" id="CHEBI:18420"/>
    </ligand>
</feature>
<feature type="binding site" evidence="1">
    <location>
        <begin position="176"/>
        <end position="177"/>
    </location>
    <ligand>
        <name>ATP</name>
        <dbReference type="ChEBI" id="CHEBI:30616"/>
    </ligand>
</feature>
<feature type="binding site" evidence="1">
    <location>
        <begin position="205"/>
        <end position="207"/>
    </location>
    <ligand>
        <name>ATP</name>
        <dbReference type="ChEBI" id="CHEBI:30616"/>
    </ligand>
</feature>
<dbReference type="EC" id="6.3.3.3" evidence="1"/>
<dbReference type="EMBL" id="AE016795">
    <property type="protein sequence ID" value="AAO11271.1"/>
    <property type="molecule type" value="Genomic_DNA"/>
</dbReference>
<dbReference type="RefSeq" id="WP_011080758.1">
    <property type="nucleotide sequence ID" value="NC_004459.3"/>
</dbReference>
<dbReference type="SMR" id="Q8D8N2"/>
<dbReference type="KEGG" id="vvu:VV1_2940"/>
<dbReference type="HOGENOM" id="CLU_072551_0_0_6"/>
<dbReference type="UniPathway" id="UPA00078">
    <property type="reaction ID" value="UER00161"/>
</dbReference>
<dbReference type="Proteomes" id="UP000002275">
    <property type="component" value="Chromosome 1"/>
</dbReference>
<dbReference type="GO" id="GO:0005829">
    <property type="term" value="C:cytosol"/>
    <property type="evidence" value="ECO:0007669"/>
    <property type="project" value="TreeGrafter"/>
</dbReference>
<dbReference type="GO" id="GO:0005524">
    <property type="term" value="F:ATP binding"/>
    <property type="evidence" value="ECO:0007669"/>
    <property type="project" value="UniProtKB-UniRule"/>
</dbReference>
<dbReference type="GO" id="GO:0004141">
    <property type="term" value="F:dethiobiotin synthase activity"/>
    <property type="evidence" value="ECO:0007669"/>
    <property type="project" value="UniProtKB-UniRule"/>
</dbReference>
<dbReference type="GO" id="GO:0000287">
    <property type="term" value="F:magnesium ion binding"/>
    <property type="evidence" value="ECO:0007669"/>
    <property type="project" value="UniProtKB-UniRule"/>
</dbReference>
<dbReference type="GO" id="GO:0009102">
    <property type="term" value="P:biotin biosynthetic process"/>
    <property type="evidence" value="ECO:0007669"/>
    <property type="project" value="UniProtKB-UniRule"/>
</dbReference>
<dbReference type="CDD" id="cd03109">
    <property type="entry name" value="DTBS"/>
    <property type="match status" value="1"/>
</dbReference>
<dbReference type="FunFam" id="3.40.50.300:FF:000292">
    <property type="entry name" value="ATP-dependent dethiobiotin synthetase BioD"/>
    <property type="match status" value="1"/>
</dbReference>
<dbReference type="Gene3D" id="3.40.50.300">
    <property type="entry name" value="P-loop containing nucleotide triphosphate hydrolases"/>
    <property type="match status" value="1"/>
</dbReference>
<dbReference type="HAMAP" id="MF_00336">
    <property type="entry name" value="BioD"/>
    <property type="match status" value="1"/>
</dbReference>
<dbReference type="InterPro" id="IPR004472">
    <property type="entry name" value="DTB_synth_BioD"/>
</dbReference>
<dbReference type="InterPro" id="IPR027417">
    <property type="entry name" value="P-loop_NTPase"/>
</dbReference>
<dbReference type="NCBIfam" id="TIGR00347">
    <property type="entry name" value="bioD"/>
    <property type="match status" value="1"/>
</dbReference>
<dbReference type="PANTHER" id="PTHR43210">
    <property type="entry name" value="DETHIOBIOTIN SYNTHETASE"/>
    <property type="match status" value="1"/>
</dbReference>
<dbReference type="PANTHER" id="PTHR43210:SF5">
    <property type="entry name" value="DETHIOBIOTIN SYNTHETASE"/>
    <property type="match status" value="1"/>
</dbReference>
<dbReference type="Pfam" id="PF13500">
    <property type="entry name" value="AAA_26"/>
    <property type="match status" value="1"/>
</dbReference>
<dbReference type="PIRSF" id="PIRSF006755">
    <property type="entry name" value="DTB_synth"/>
    <property type="match status" value="1"/>
</dbReference>
<dbReference type="SUPFAM" id="SSF52540">
    <property type="entry name" value="P-loop containing nucleoside triphosphate hydrolases"/>
    <property type="match status" value="1"/>
</dbReference>
<sequence length="227" mass="24636">MMKAFFIAGTDTDVGKTVASKAILHALAAKDLRTIGYKPVAAGSDKTPEGWRNSDALHLQKAATVAVDYEDINPYALELPASPHIAAKHEKVEIDYAVLSRKLAQHKENADVVLVEGAGGWRVPVSDTDSLSTWVKQEDLPVVLVVGIKLGCLSHALLTAEVIKADGLNLVGWVANRVNPGTEHYAEIIDMLEERLEVPKLGEIPYIPSAKRKDLGKYINADVLLEL</sequence>